<accession>Q0VSI6</accession>
<reference key="1">
    <citation type="journal article" date="2006" name="Nat. Biotechnol.">
        <title>Genome sequence of the ubiquitous hydrocarbon-degrading marine bacterium Alcanivorax borkumensis.</title>
        <authorList>
            <person name="Schneiker S."/>
            <person name="Martins dos Santos V.A.P."/>
            <person name="Bartels D."/>
            <person name="Bekel T."/>
            <person name="Brecht M."/>
            <person name="Buhrmester J."/>
            <person name="Chernikova T.N."/>
            <person name="Denaro R."/>
            <person name="Ferrer M."/>
            <person name="Gertler C."/>
            <person name="Goesmann A."/>
            <person name="Golyshina O.V."/>
            <person name="Kaminski F."/>
            <person name="Khachane A.N."/>
            <person name="Lang S."/>
            <person name="Linke B."/>
            <person name="McHardy A.C."/>
            <person name="Meyer F."/>
            <person name="Nechitaylo T."/>
            <person name="Puehler A."/>
            <person name="Regenhardt D."/>
            <person name="Rupp O."/>
            <person name="Sabirova J.S."/>
            <person name="Selbitschka W."/>
            <person name="Yakimov M.M."/>
            <person name="Timmis K.N."/>
            <person name="Vorhoelter F.-J."/>
            <person name="Weidner S."/>
            <person name="Kaiser O."/>
            <person name="Golyshin P.N."/>
        </authorList>
    </citation>
    <scope>NUCLEOTIDE SEQUENCE [LARGE SCALE GENOMIC DNA]</scope>
    <source>
        <strain>ATCC 700651 / DSM 11573 / NCIMB 13689 / SK2</strain>
    </source>
</reference>
<protein>
    <recommendedName>
        <fullName evidence="1">Small ribosomal subunit protein uS5</fullName>
    </recommendedName>
    <alternativeName>
        <fullName evidence="2">30S ribosomal protein S5</fullName>
    </alternativeName>
</protein>
<evidence type="ECO:0000255" key="1">
    <source>
        <dbReference type="HAMAP-Rule" id="MF_01307"/>
    </source>
</evidence>
<evidence type="ECO:0000305" key="2"/>
<gene>
    <name evidence="1" type="primary">rpsE</name>
    <name type="ordered locus">ABO_0414</name>
</gene>
<proteinExistence type="inferred from homology"/>
<dbReference type="EMBL" id="AM286690">
    <property type="protein sequence ID" value="CAL15862.1"/>
    <property type="molecule type" value="Genomic_DNA"/>
</dbReference>
<dbReference type="SMR" id="Q0VSI6"/>
<dbReference type="STRING" id="393595.ABO_0414"/>
<dbReference type="KEGG" id="abo:ABO_0414"/>
<dbReference type="eggNOG" id="COG0098">
    <property type="taxonomic scope" value="Bacteria"/>
</dbReference>
<dbReference type="HOGENOM" id="CLU_065898_2_2_6"/>
<dbReference type="Proteomes" id="UP000008871">
    <property type="component" value="Chromosome"/>
</dbReference>
<dbReference type="GO" id="GO:0015935">
    <property type="term" value="C:small ribosomal subunit"/>
    <property type="evidence" value="ECO:0007669"/>
    <property type="project" value="InterPro"/>
</dbReference>
<dbReference type="GO" id="GO:0019843">
    <property type="term" value="F:rRNA binding"/>
    <property type="evidence" value="ECO:0007669"/>
    <property type="project" value="UniProtKB-UniRule"/>
</dbReference>
<dbReference type="GO" id="GO:0003735">
    <property type="term" value="F:structural constituent of ribosome"/>
    <property type="evidence" value="ECO:0007669"/>
    <property type="project" value="InterPro"/>
</dbReference>
<dbReference type="GO" id="GO:0006412">
    <property type="term" value="P:translation"/>
    <property type="evidence" value="ECO:0007669"/>
    <property type="project" value="UniProtKB-UniRule"/>
</dbReference>
<dbReference type="FunFam" id="3.30.160.20:FF:000001">
    <property type="entry name" value="30S ribosomal protein S5"/>
    <property type="match status" value="1"/>
</dbReference>
<dbReference type="FunFam" id="3.30.230.10:FF:000002">
    <property type="entry name" value="30S ribosomal protein S5"/>
    <property type="match status" value="1"/>
</dbReference>
<dbReference type="Gene3D" id="3.30.160.20">
    <property type="match status" value="1"/>
</dbReference>
<dbReference type="Gene3D" id="3.30.230.10">
    <property type="match status" value="1"/>
</dbReference>
<dbReference type="HAMAP" id="MF_01307_B">
    <property type="entry name" value="Ribosomal_uS5_B"/>
    <property type="match status" value="1"/>
</dbReference>
<dbReference type="InterPro" id="IPR020568">
    <property type="entry name" value="Ribosomal_Su5_D2-typ_SF"/>
</dbReference>
<dbReference type="InterPro" id="IPR000851">
    <property type="entry name" value="Ribosomal_uS5"/>
</dbReference>
<dbReference type="InterPro" id="IPR005712">
    <property type="entry name" value="Ribosomal_uS5_bac-type"/>
</dbReference>
<dbReference type="InterPro" id="IPR005324">
    <property type="entry name" value="Ribosomal_uS5_C"/>
</dbReference>
<dbReference type="InterPro" id="IPR013810">
    <property type="entry name" value="Ribosomal_uS5_N"/>
</dbReference>
<dbReference type="InterPro" id="IPR018192">
    <property type="entry name" value="Ribosomal_uS5_N_CS"/>
</dbReference>
<dbReference type="InterPro" id="IPR014721">
    <property type="entry name" value="Ribsml_uS5_D2-typ_fold_subgr"/>
</dbReference>
<dbReference type="NCBIfam" id="TIGR01021">
    <property type="entry name" value="rpsE_bact"/>
    <property type="match status" value="1"/>
</dbReference>
<dbReference type="PANTHER" id="PTHR48277">
    <property type="entry name" value="MITOCHONDRIAL RIBOSOMAL PROTEIN S5"/>
    <property type="match status" value="1"/>
</dbReference>
<dbReference type="PANTHER" id="PTHR48277:SF1">
    <property type="entry name" value="MITOCHONDRIAL RIBOSOMAL PROTEIN S5"/>
    <property type="match status" value="1"/>
</dbReference>
<dbReference type="Pfam" id="PF00333">
    <property type="entry name" value="Ribosomal_S5"/>
    <property type="match status" value="1"/>
</dbReference>
<dbReference type="Pfam" id="PF03719">
    <property type="entry name" value="Ribosomal_S5_C"/>
    <property type="match status" value="1"/>
</dbReference>
<dbReference type="SUPFAM" id="SSF54768">
    <property type="entry name" value="dsRNA-binding domain-like"/>
    <property type="match status" value="1"/>
</dbReference>
<dbReference type="SUPFAM" id="SSF54211">
    <property type="entry name" value="Ribosomal protein S5 domain 2-like"/>
    <property type="match status" value="1"/>
</dbReference>
<dbReference type="PROSITE" id="PS00585">
    <property type="entry name" value="RIBOSOMAL_S5"/>
    <property type="match status" value="1"/>
</dbReference>
<dbReference type="PROSITE" id="PS50881">
    <property type="entry name" value="S5_DSRBD"/>
    <property type="match status" value="1"/>
</dbReference>
<keyword id="KW-1185">Reference proteome</keyword>
<keyword id="KW-0687">Ribonucleoprotein</keyword>
<keyword id="KW-0689">Ribosomal protein</keyword>
<keyword id="KW-0694">RNA-binding</keyword>
<keyword id="KW-0699">rRNA-binding</keyword>
<name>RS5_ALCBS</name>
<organism>
    <name type="scientific">Alcanivorax borkumensis (strain ATCC 700651 / DSM 11573 / NCIMB 13689 / SK2)</name>
    <dbReference type="NCBI Taxonomy" id="393595"/>
    <lineage>
        <taxon>Bacteria</taxon>
        <taxon>Pseudomonadati</taxon>
        <taxon>Pseudomonadota</taxon>
        <taxon>Gammaproteobacteria</taxon>
        <taxon>Oceanospirillales</taxon>
        <taxon>Alcanivoracaceae</taxon>
        <taxon>Alcanivorax</taxon>
    </lineage>
</organism>
<comment type="function">
    <text evidence="1">With S4 and S12 plays an important role in translational accuracy.</text>
</comment>
<comment type="function">
    <text evidence="1">Located at the back of the 30S subunit body where it stabilizes the conformation of the head with respect to the body.</text>
</comment>
<comment type="subunit">
    <text evidence="1">Part of the 30S ribosomal subunit. Contacts proteins S4 and S8.</text>
</comment>
<comment type="domain">
    <text>The N-terminal domain interacts with the head of the 30S subunit; the C-terminal domain interacts with the body and contacts protein S4. The interaction surface between S4 and S5 is involved in control of translational fidelity.</text>
</comment>
<comment type="similarity">
    <text evidence="1">Belongs to the universal ribosomal protein uS5 family.</text>
</comment>
<feature type="chain" id="PRO_0000323058" description="Small ribosomal subunit protein uS5">
    <location>
        <begin position="1"/>
        <end position="167"/>
    </location>
</feature>
<feature type="domain" description="S5 DRBM" evidence="1">
    <location>
        <begin position="12"/>
        <end position="75"/>
    </location>
</feature>
<sequence length="167" mass="17555">MVMAKVDPNEGLQEKLVQVNRVAKVVKGGRIFGFTALTVVGDGKGKVGFGRGKAREVPAAIQKALEAARRNMIQVELNGTTIQHPMKARHGASKVYMQPADEGTGVIAGGAMRAVLEVAGVQNVLAKCYGSTNPVNVVRATFNGLKSMASPESVAAKRGKSVDEILN</sequence>